<accession>Q83HI9</accession>
<dbReference type="EC" id="1.1.1.86" evidence="1"/>
<dbReference type="EMBL" id="BX251411">
    <property type="protein sequence ID" value="CAD67231.1"/>
    <property type="molecule type" value="Genomic_DNA"/>
</dbReference>
<dbReference type="RefSeq" id="WP_011096511.1">
    <property type="nucleotide sequence ID" value="NC_004551.1"/>
</dbReference>
<dbReference type="SMR" id="Q83HI9"/>
<dbReference type="GeneID" id="67388344"/>
<dbReference type="KEGG" id="tws:TW565"/>
<dbReference type="HOGENOM" id="CLU_033821_0_1_11"/>
<dbReference type="UniPathway" id="UPA00047">
    <property type="reaction ID" value="UER00056"/>
</dbReference>
<dbReference type="UniPathway" id="UPA00049">
    <property type="reaction ID" value="UER00060"/>
</dbReference>
<dbReference type="GO" id="GO:0005829">
    <property type="term" value="C:cytosol"/>
    <property type="evidence" value="ECO:0007669"/>
    <property type="project" value="TreeGrafter"/>
</dbReference>
<dbReference type="GO" id="GO:0004455">
    <property type="term" value="F:ketol-acid reductoisomerase activity"/>
    <property type="evidence" value="ECO:0007669"/>
    <property type="project" value="UniProtKB-UniRule"/>
</dbReference>
<dbReference type="GO" id="GO:0000287">
    <property type="term" value="F:magnesium ion binding"/>
    <property type="evidence" value="ECO:0007669"/>
    <property type="project" value="UniProtKB-UniRule"/>
</dbReference>
<dbReference type="GO" id="GO:0050661">
    <property type="term" value="F:NADP binding"/>
    <property type="evidence" value="ECO:0007669"/>
    <property type="project" value="InterPro"/>
</dbReference>
<dbReference type="GO" id="GO:0009097">
    <property type="term" value="P:isoleucine biosynthetic process"/>
    <property type="evidence" value="ECO:0007669"/>
    <property type="project" value="UniProtKB-UniRule"/>
</dbReference>
<dbReference type="GO" id="GO:0009099">
    <property type="term" value="P:L-valine biosynthetic process"/>
    <property type="evidence" value="ECO:0007669"/>
    <property type="project" value="UniProtKB-UniRule"/>
</dbReference>
<dbReference type="FunFam" id="3.40.50.720:FF:000023">
    <property type="entry name" value="Ketol-acid reductoisomerase (NADP(+))"/>
    <property type="match status" value="1"/>
</dbReference>
<dbReference type="Gene3D" id="6.10.240.10">
    <property type="match status" value="1"/>
</dbReference>
<dbReference type="Gene3D" id="3.40.50.720">
    <property type="entry name" value="NAD(P)-binding Rossmann-like Domain"/>
    <property type="match status" value="1"/>
</dbReference>
<dbReference type="HAMAP" id="MF_00435">
    <property type="entry name" value="IlvC"/>
    <property type="match status" value="1"/>
</dbReference>
<dbReference type="InterPro" id="IPR008927">
    <property type="entry name" value="6-PGluconate_DH-like_C_sf"/>
</dbReference>
<dbReference type="InterPro" id="IPR013023">
    <property type="entry name" value="KARI"/>
</dbReference>
<dbReference type="InterPro" id="IPR000506">
    <property type="entry name" value="KARI_C"/>
</dbReference>
<dbReference type="InterPro" id="IPR013116">
    <property type="entry name" value="KARI_N"/>
</dbReference>
<dbReference type="InterPro" id="IPR014359">
    <property type="entry name" value="KARI_prok"/>
</dbReference>
<dbReference type="InterPro" id="IPR036291">
    <property type="entry name" value="NAD(P)-bd_dom_sf"/>
</dbReference>
<dbReference type="NCBIfam" id="TIGR00465">
    <property type="entry name" value="ilvC"/>
    <property type="match status" value="1"/>
</dbReference>
<dbReference type="NCBIfam" id="NF004017">
    <property type="entry name" value="PRK05479.1"/>
    <property type="match status" value="1"/>
</dbReference>
<dbReference type="PANTHER" id="PTHR21371">
    <property type="entry name" value="KETOL-ACID REDUCTOISOMERASE, MITOCHONDRIAL"/>
    <property type="match status" value="1"/>
</dbReference>
<dbReference type="PANTHER" id="PTHR21371:SF1">
    <property type="entry name" value="KETOL-ACID REDUCTOISOMERASE, MITOCHONDRIAL"/>
    <property type="match status" value="1"/>
</dbReference>
<dbReference type="Pfam" id="PF01450">
    <property type="entry name" value="KARI_C"/>
    <property type="match status" value="1"/>
</dbReference>
<dbReference type="Pfam" id="PF07991">
    <property type="entry name" value="KARI_N"/>
    <property type="match status" value="1"/>
</dbReference>
<dbReference type="PIRSF" id="PIRSF000116">
    <property type="entry name" value="IlvC_gammaproteo"/>
    <property type="match status" value="1"/>
</dbReference>
<dbReference type="SUPFAM" id="SSF48179">
    <property type="entry name" value="6-phosphogluconate dehydrogenase C-terminal domain-like"/>
    <property type="match status" value="1"/>
</dbReference>
<dbReference type="SUPFAM" id="SSF51735">
    <property type="entry name" value="NAD(P)-binding Rossmann-fold domains"/>
    <property type="match status" value="1"/>
</dbReference>
<dbReference type="PROSITE" id="PS51851">
    <property type="entry name" value="KARI_C"/>
    <property type="match status" value="1"/>
</dbReference>
<dbReference type="PROSITE" id="PS51850">
    <property type="entry name" value="KARI_N"/>
    <property type="match status" value="1"/>
</dbReference>
<feature type="chain" id="PRO_0000151376" description="Ketol-acid reductoisomerase (NADP(+))">
    <location>
        <begin position="1"/>
        <end position="333"/>
    </location>
</feature>
<feature type="domain" description="KARI N-terminal Rossmann" evidence="2">
    <location>
        <begin position="6"/>
        <end position="186"/>
    </location>
</feature>
<feature type="domain" description="KARI C-terminal knotted" evidence="3">
    <location>
        <begin position="187"/>
        <end position="332"/>
    </location>
</feature>
<feature type="active site" evidence="1">
    <location>
        <position position="112"/>
    </location>
</feature>
<feature type="binding site" evidence="1">
    <location>
        <begin position="29"/>
        <end position="32"/>
    </location>
    <ligand>
        <name>NADP(+)</name>
        <dbReference type="ChEBI" id="CHEBI:58349"/>
    </ligand>
</feature>
<feature type="binding site" evidence="1">
    <location>
        <position position="52"/>
    </location>
    <ligand>
        <name>NADP(+)</name>
        <dbReference type="ChEBI" id="CHEBI:58349"/>
    </ligand>
</feature>
<feature type="binding site" evidence="1">
    <location>
        <position position="55"/>
    </location>
    <ligand>
        <name>NADP(+)</name>
        <dbReference type="ChEBI" id="CHEBI:58349"/>
    </ligand>
</feature>
<feature type="binding site" evidence="1">
    <location>
        <position position="57"/>
    </location>
    <ligand>
        <name>NADP(+)</name>
        <dbReference type="ChEBI" id="CHEBI:58349"/>
    </ligand>
</feature>
<feature type="binding site" evidence="1">
    <location>
        <begin position="87"/>
        <end position="90"/>
    </location>
    <ligand>
        <name>NADP(+)</name>
        <dbReference type="ChEBI" id="CHEBI:58349"/>
    </ligand>
</feature>
<feature type="binding site" evidence="1">
    <location>
        <position position="138"/>
    </location>
    <ligand>
        <name>NADP(+)</name>
        <dbReference type="ChEBI" id="CHEBI:58349"/>
    </ligand>
</feature>
<feature type="binding site" evidence="1">
    <location>
        <position position="195"/>
    </location>
    <ligand>
        <name>Mg(2+)</name>
        <dbReference type="ChEBI" id="CHEBI:18420"/>
        <label>1</label>
    </ligand>
</feature>
<feature type="binding site" evidence="1">
    <location>
        <position position="195"/>
    </location>
    <ligand>
        <name>Mg(2+)</name>
        <dbReference type="ChEBI" id="CHEBI:18420"/>
        <label>2</label>
    </ligand>
</feature>
<feature type="binding site" evidence="1">
    <location>
        <position position="199"/>
    </location>
    <ligand>
        <name>Mg(2+)</name>
        <dbReference type="ChEBI" id="CHEBI:18420"/>
        <label>1</label>
    </ligand>
</feature>
<feature type="binding site" evidence="1">
    <location>
        <position position="231"/>
    </location>
    <ligand>
        <name>Mg(2+)</name>
        <dbReference type="ChEBI" id="CHEBI:18420"/>
        <label>2</label>
    </ligand>
</feature>
<feature type="binding site" evidence="1">
    <location>
        <position position="235"/>
    </location>
    <ligand>
        <name>Mg(2+)</name>
        <dbReference type="ChEBI" id="CHEBI:18420"/>
        <label>2</label>
    </ligand>
</feature>
<feature type="binding site" evidence="1">
    <location>
        <position position="256"/>
    </location>
    <ligand>
        <name>substrate</name>
    </ligand>
</feature>
<proteinExistence type="inferred from homology"/>
<name>ILVC_TROW8</name>
<evidence type="ECO:0000255" key="1">
    <source>
        <dbReference type="HAMAP-Rule" id="MF_00435"/>
    </source>
</evidence>
<evidence type="ECO:0000255" key="2">
    <source>
        <dbReference type="PROSITE-ProRule" id="PRU01197"/>
    </source>
</evidence>
<evidence type="ECO:0000255" key="3">
    <source>
        <dbReference type="PROSITE-ProRule" id="PRU01198"/>
    </source>
</evidence>
<keyword id="KW-0028">Amino-acid biosynthesis</keyword>
<keyword id="KW-0100">Branched-chain amino acid biosynthesis</keyword>
<keyword id="KW-0460">Magnesium</keyword>
<keyword id="KW-0479">Metal-binding</keyword>
<keyword id="KW-0521">NADP</keyword>
<keyword id="KW-0560">Oxidoreductase</keyword>
<comment type="function">
    <text evidence="1">Involved in the biosynthesis of branched-chain amino acids (BCAA). Catalyzes an alkyl-migration followed by a ketol-acid reduction of (S)-2-acetolactate (S2AL) to yield (R)-2,3-dihydroxy-isovalerate. In the isomerase reaction, S2AL is rearranged via a Mg-dependent methyl migration to produce 3-hydroxy-3-methyl-2-ketobutyrate (HMKB). In the reductase reaction, this 2-ketoacid undergoes a metal-dependent reduction by NADPH to yield (R)-2,3-dihydroxy-isovalerate.</text>
</comment>
<comment type="catalytic activity">
    <reaction evidence="1">
        <text>(2R)-2,3-dihydroxy-3-methylbutanoate + NADP(+) = (2S)-2-acetolactate + NADPH + H(+)</text>
        <dbReference type="Rhea" id="RHEA:22068"/>
        <dbReference type="ChEBI" id="CHEBI:15378"/>
        <dbReference type="ChEBI" id="CHEBI:49072"/>
        <dbReference type="ChEBI" id="CHEBI:57783"/>
        <dbReference type="ChEBI" id="CHEBI:58349"/>
        <dbReference type="ChEBI" id="CHEBI:58476"/>
        <dbReference type="EC" id="1.1.1.86"/>
    </reaction>
</comment>
<comment type="catalytic activity">
    <reaction evidence="1">
        <text>(2R,3R)-2,3-dihydroxy-3-methylpentanoate + NADP(+) = (S)-2-ethyl-2-hydroxy-3-oxobutanoate + NADPH + H(+)</text>
        <dbReference type="Rhea" id="RHEA:13493"/>
        <dbReference type="ChEBI" id="CHEBI:15378"/>
        <dbReference type="ChEBI" id="CHEBI:49256"/>
        <dbReference type="ChEBI" id="CHEBI:49258"/>
        <dbReference type="ChEBI" id="CHEBI:57783"/>
        <dbReference type="ChEBI" id="CHEBI:58349"/>
        <dbReference type="EC" id="1.1.1.86"/>
    </reaction>
</comment>
<comment type="cofactor">
    <cofactor evidence="1">
        <name>Mg(2+)</name>
        <dbReference type="ChEBI" id="CHEBI:18420"/>
    </cofactor>
    <text evidence="1">Binds 2 magnesium ions per subunit.</text>
</comment>
<comment type="pathway">
    <text evidence="1">Amino-acid biosynthesis; L-isoleucine biosynthesis; L-isoleucine from 2-oxobutanoate: step 2/4.</text>
</comment>
<comment type="pathway">
    <text evidence="1">Amino-acid biosynthesis; L-valine biosynthesis; L-valine from pyruvate: step 2/4.</text>
</comment>
<comment type="similarity">
    <text evidence="1">Belongs to the ketol-acid reductoisomerase family.</text>
</comment>
<sequence>MSEIGTRVYTECDADLSLIQNVLVAVIGYGSQGHAQALNLRDSGVNVVIGLKENSASRKSAQDSGFEVLLPQEAAKKAQLIALLVPDPAQRDVYESAIKHNLSEGDALLFSHGFNIRYGYITPPDGVDVLMVAPKGPGHMVRREYLDNRGTPAVFAIEKDASGRCFDLALSYAKGIGALRAGAIQTTFTEETETDLFGEQAVLCGGLEQLIQYGYETLVEAGYQPEVAYFEVLHELKLIIDLIVEGGLSKSRWSISDTAEYGSYVSGPRVIDKHVKENMKKILGEIRSGEFANRFIKDQDSGANEFTQLREIAARHPIEEVGARLRALFSWSK</sequence>
<protein>
    <recommendedName>
        <fullName evidence="1">Ketol-acid reductoisomerase (NADP(+))</fullName>
        <shortName evidence="1">KARI</shortName>
        <ecNumber evidence="1">1.1.1.86</ecNumber>
    </recommendedName>
    <alternativeName>
        <fullName evidence="1">Acetohydroxy-acid isomeroreductase</fullName>
        <shortName evidence="1">AHIR</shortName>
    </alternativeName>
    <alternativeName>
        <fullName evidence="1">Alpha-keto-beta-hydroxylacyl reductoisomerase</fullName>
    </alternativeName>
    <alternativeName>
        <fullName evidence="1">Ketol-acid reductoisomerase type 1</fullName>
    </alternativeName>
    <alternativeName>
        <fullName evidence="1">Ketol-acid reductoisomerase type I</fullName>
    </alternativeName>
</protein>
<organism>
    <name type="scientific">Tropheryma whipplei (strain TW08/27)</name>
    <name type="common">Whipple's bacillus</name>
    <dbReference type="NCBI Taxonomy" id="218496"/>
    <lineage>
        <taxon>Bacteria</taxon>
        <taxon>Bacillati</taxon>
        <taxon>Actinomycetota</taxon>
        <taxon>Actinomycetes</taxon>
        <taxon>Micrococcales</taxon>
        <taxon>Tropherymataceae</taxon>
        <taxon>Tropheryma</taxon>
    </lineage>
</organism>
<gene>
    <name evidence="1" type="primary">ilvC</name>
    <name type="ordered locus">TW565</name>
</gene>
<reference key="1">
    <citation type="journal article" date="2003" name="Lancet">
        <title>Sequencing and analysis of the genome of the Whipple's disease bacterium Tropheryma whipplei.</title>
        <authorList>
            <person name="Bentley S.D."/>
            <person name="Maiwald M."/>
            <person name="Murphy L.D."/>
            <person name="Pallen M.J."/>
            <person name="Yeats C.A."/>
            <person name="Dover L.G."/>
            <person name="Norbertczak H.T."/>
            <person name="Besra G.S."/>
            <person name="Quail M.A."/>
            <person name="Harris D.E."/>
            <person name="von Herbay A."/>
            <person name="Goble A."/>
            <person name="Rutter S."/>
            <person name="Squares R."/>
            <person name="Squares S."/>
            <person name="Barrell B.G."/>
            <person name="Parkhill J."/>
            <person name="Relman D.A."/>
        </authorList>
    </citation>
    <scope>NUCLEOTIDE SEQUENCE [LARGE SCALE GENOMIC DNA]</scope>
    <source>
        <strain>TW08/27</strain>
    </source>
</reference>